<gene>
    <name evidence="1" type="primary">nrfA</name>
    <name type="ordered locus">SARI_03399</name>
</gene>
<dbReference type="EC" id="1.7.2.2" evidence="1"/>
<dbReference type="EMBL" id="CP000880">
    <property type="protein sequence ID" value="ABX23229.1"/>
    <property type="molecule type" value="Genomic_DNA"/>
</dbReference>
<dbReference type="SMR" id="A9MGK5"/>
<dbReference type="STRING" id="41514.SARI_03399"/>
<dbReference type="KEGG" id="ses:SARI_03399"/>
<dbReference type="HOGENOM" id="CLU_035040_1_0_6"/>
<dbReference type="UniPathway" id="UPA00653"/>
<dbReference type="Proteomes" id="UP000002084">
    <property type="component" value="Chromosome"/>
</dbReference>
<dbReference type="GO" id="GO:0030288">
    <property type="term" value="C:outer membrane-bounded periplasmic space"/>
    <property type="evidence" value="ECO:0007669"/>
    <property type="project" value="TreeGrafter"/>
</dbReference>
<dbReference type="GO" id="GO:0005509">
    <property type="term" value="F:calcium ion binding"/>
    <property type="evidence" value="ECO:0007669"/>
    <property type="project" value="UniProtKB-UniRule"/>
</dbReference>
<dbReference type="GO" id="GO:0020037">
    <property type="term" value="F:heme binding"/>
    <property type="evidence" value="ECO:0007669"/>
    <property type="project" value="InterPro"/>
</dbReference>
<dbReference type="GO" id="GO:0005506">
    <property type="term" value="F:iron ion binding"/>
    <property type="evidence" value="ECO:0007669"/>
    <property type="project" value="UniProtKB-UniRule"/>
</dbReference>
<dbReference type="GO" id="GO:0042279">
    <property type="term" value="F:nitrite reductase (cytochrome, ammonia-forming) activity"/>
    <property type="evidence" value="ECO:0007669"/>
    <property type="project" value="UniProtKB-UniRule"/>
</dbReference>
<dbReference type="GO" id="GO:0019645">
    <property type="term" value="P:anaerobic electron transport chain"/>
    <property type="evidence" value="ECO:0007669"/>
    <property type="project" value="TreeGrafter"/>
</dbReference>
<dbReference type="GO" id="GO:0042128">
    <property type="term" value="P:nitrate assimilation"/>
    <property type="evidence" value="ECO:0007669"/>
    <property type="project" value="UniProtKB-UniRule"/>
</dbReference>
<dbReference type="CDD" id="cd00548">
    <property type="entry name" value="NrfA-like"/>
    <property type="match status" value="1"/>
</dbReference>
<dbReference type="FunFam" id="1.10.1130.10:FF:000002">
    <property type="entry name" value="Cytochrome c-552"/>
    <property type="match status" value="1"/>
</dbReference>
<dbReference type="FunFam" id="1.20.140.10:FF:000014">
    <property type="entry name" value="Cytochrome c-552"/>
    <property type="match status" value="1"/>
</dbReference>
<dbReference type="Gene3D" id="1.20.140.10">
    <property type="entry name" value="Butyryl-CoA Dehydrogenase, subunit A, domain 3"/>
    <property type="match status" value="1"/>
</dbReference>
<dbReference type="Gene3D" id="1.10.1130.10">
    <property type="entry name" value="Flavocytochrome C3, Chain A"/>
    <property type="match status" value="1"/>
</dbReference>
<dbReference type="HAMAP" id="MF_01182">
    <property type="entry name" value="Cytochrom_C552"/>
    <property type="match status" value="1"/>
</dbReference>
<dbReference type="InterPro" id="IPR003321">
    <property type="entry name" value="Cyt_c552"/>
</dbReference>
<dbReference type="InterPro" id="IPR017570">
    <property type="entry name" value="Cyt_c_NO2Rdtase_formate-dep"/>
</dbReference>
<dbReference type="InterPro" id="IPR036280">
    <property type="entry name" value="Multihaem_cyt_sf"/>
</dbReference>
<dbReference type="NCBIfam" id="TIGR03152">
    <property type="entry name" value="cyto_c552_HCOOH"/>
    <property type="match status" value="1"/>
</dbReference>
<dbReference type="NCBIfam" id="NF008339">
    <property type="entry name" value="PRK11125.1"/>
    <property type="match status" value="1"/>
</dbReference>
<dbReference type="PANTHER" id="PTHR30633:SF0">
    <property type="entry name" value="CYTOCHROME C-552"/>
    <property type="match status" value="1"/>
</dbReference>
<dbReference type="PANTHER" id="PTHR30633">
    <property type="entry name" value="CYTOCHROME C-552 RESPIRATORY NITRITE REDUCTASE"/>
    <property type="match status" value="1"/>
</dbReference>
<dbReference type="Pfam" id="PF02335">
    <property type="entry name" value="Cytochrom_C552"/>
    <property type="match status" value="1"/>
</dbReference>
<dbReference type="PIRSF" id="PIRSF000243">
    <property type="entry name" value="Cyt_c552"/>
    <property type="match status" value="1"/>
</dbReference>
<dbReference type="SUPFAM" id="SSF48695">
    <property type="entry name" value="Multiheme cytochromes"/>
    <property type="match status" value="1"/>
</dbReference>
<dbReference type="PROSITE" id="PS51008">
    <property type="entry name" value="MULTIHEME_CYTC"/>
    <property type="match status" value="1"/>
</dbReference>
<keyword id="KW-0106">Calcium</keyword>
<keyword id="KW-0249">Electron transport</keyword>
<keyword id="KW-0349">Heme</keyword>
<keyword id="KW-0408">Iron</keyword>
<keyword id="KW-0479">Metal-binding</keyword>
<keyword id="KW-0560">Oxidoreductase</keyword>
<keyword id="KW-0574">Periplasm</keyword>
<keyword id="KW-1185">Reference proteome</keyword>
<keyword id="KW-0732">Signal</keyword>
<keyword id="KW-0813">Transport</keyword>
<reference key="1">
    <citation type="submission" date="2007-11" db="EMBL/GenBank/DDBJ databases">
        <authorList>
            <consortium name="The Salmonella enterica serovar Arizonae Genome Sequencing Project"/>
            <person name="McClelland M."/>
            <person name="Sanderson E.K."/>
            <person name="Porwollik S."/>
            <person name="Spieth J."/>
            <person name="Clifton W.S."/>
            <person name="Fulton R."/>
            <person name="Chunyan W."/>
            <person name="Wollam A."/>
            <person name="Shah N."/>
            <person name="Pepin K."/>
            <person name="Bhonagiri V."/>
            <person name="Nash W."/>
            <person name="Johnson M."/>
            <person name="Thiruvilangam P."/>
            <person name="Wilson R."/>
        </authorList>
    </citation>
    <scope>NUCLEOTIDE SEQUENCE [LARGE SCALE GENOMIC DNA]</scope>
    <source>
        <strain>ATCC BAA-731 / CDC346-86 / RSK2980</strain>
    </source>
</reference>
<accession>A9MGK5</accession>
<organism>
    <name type="scientific">Salmonella arizonae (strain ATCC BAA-731 / CDC346-86 / RSK2980)</name>
    <dbReference type="NCBI Taxonomy" id="41514"/>
    <lineage>
        <taxon>Bacteria</taxon>
        <taxon>Pseudomonadati</taxon>
        <taxon>Pseudomonadota</taxon>
        <taxon>Gammaproteobacteria</taxon>
        <taxon>Enterobacterales</taxon>
        <taxon>Enterobacteriaceae</taxon>
        <taxon>Salmonella</taxon>
    </lineage>
</organism>
<protein>
    <recommendedName>
        <fullName evidence="1">Cytochrome c-552</fullName>
        <ecNumber evidence="1">1.7.2.2</ecNumber>
    </recommendedName>
    <alternativeName>
        <fullName evidence="1">Ammonia-forming cytochrome c nitrite reductase</fullName>
        <shortName evidence="1">Cytochrome c nitrite reductase</shortName>
    </alternativeName>
</protein>
<feature type="signal peptide" evidence="1">
    <location>
        <begin position="1"/>
        <end position="26"/>
    </location>
</feature>
<feature type="chain" id="PRO_1000085448" description="Cytochrome c-552">
    <location>
        <begin position="27"/>
        <end position="478"/>
    </location>
</feature>
<feature type="binding site" description="axial binding residue" evidence="1">
    <location>
        <position position="94"/>
    </location>
    <ligand>
        <name>heme c</name>
        <dbReference type="ChEBI" id="CHEBI:61717"/>
        <label>3</label>
    </ligand>
    <ligandPart>
        <name>Fe</name>
        <dbReference type="ChEBI" id="CHEBI:18248"/>
    </ligandPart>
</feature>
<feature type="binding site" description="covalent" evidence="1">
    <location>
        <position position="122"/>
    </location>
    <ligand>
        <name>heme</name>
        <dbReference type="ChEBI" id="CHEBI:30413"/>
        <label>1</label>
    </ligand>
</feature>
<feature type="binding site" description="covalent" evidence="1">
    <location>
        <position position="125"/>
    </location>
    <ligand>
        <name>heme</name>
        <dbReference type="ChEBI" id="CHEBI:30413"/>
        <label>1</label>
    </ligand>
</feature>
<feature type="binding site" description="axial binding residue" evidence="1">
    <location>
        <position position="126"/>
    </location>
    <ligand>
        <name>heme</name>
        <dbReference type="ChEBI" id="CHEBI:30413"/>
        <label>1</label>
    </ligand>
    <ligandPart>
        <name>Fe</name>
        <dbReference type="ChEBI" id="CHEBI:18248"/>
    </ligandPart>
</feature>
<feature type="binding site" description="covalent" evidence="1">
    <location>
        <position position="160"/>
    </location>
    <ligand>
        <name>heme c</name>
        <dbReference type="ChEBI" id="CHEBI:61717"/>
        <label>2</label>
    </ligand>
</feature>
<feature type="binding site" description="covalent" evidence="1">
    <location>
        <position position="163"/>
    </location>
    <ligand>
        <name>heme c</name>
        <dbReference type="ChEBI" id="CHEBI:61717"/>
        <label>2</label>
    </ligand>
</feature>
<feature type="binding site" description="axial binding residue" evidence="1">
    <location>
        <position position="164"/>
    </location>
    <ligand>
        <name>heme c</name>
        <dbReference type="ChEBI" id="CHEBI:61717"/>
        <label>2</label>
    </ligand>
    <ligandPart>
        <name>Fe</name>
        <dbReference type="ChEBI" id="CHEBI:18248"/>
    </ligandPart>
</feature>
<feature type="binding site" description="covalent" evidence="1">
    <location>
        <position position="209"/>
    </location>
    <ligand>
        <name>heme c</name>
        <dbReference type="ChEBI" id="CHEBI:61717"/>
        <label>3</label>
    </ligand>
</feature>
<feature type="binding site" description="covalent" evidence="1">
    <location>
        <position position="212"/>
    </location>
    <ligand>
        <name>heme c</name>
        <dbReference type="ChEBI" id="CHEBI:61717"/>
        <label>3</label>
    </ligand>
</feature>
<feature type="binding site" description="axial binding residue" evidence="1">
    <location>
        <position position="213"/>
    </location>
    <ligand>
        <name>heme c</name>
        <dbReference type="ChEBI" id="CHEBI:61717"/>
        <label>3</label>
    </ligand>
    <ligandPart>
        <name>Fe</name>
        <dbReference type="ChEBI" id="CHEBI:18248"/>
    </ligandPart>
</feature>
<feature type="binding site" evidence="1">
    <location>
        <position position="215"/>
    </location>
    <ligand>
        <name>Ca(2+)</name>
        <dbReference type="ChEBI" id="CHEBI:29108"/>
    </ligand>
</feature>
<feature type="binding site" evidence="1">
    <location>
        <position position="216"/>
    </location>
    <ligand>
        <name>Ca(2+)</name>
        <dbReference type="ChEBI" id="CHEBI:29108"/>
    </ligand>
</feature>
<feature type="binding site" evidence="1">
    <location>
        <position position="216"/>
    </location>
    <ligand>
        <name>substrate</name>
    </ligand>
</feature>
<feature type="binding site" evidence="1">
    <location>
        <position position="261"/>
    </location>
    <ligand>
        <name>Ca(2+)</name>
        <dbReference type="ChEBI" id="CHEBI:29108"/>
    </ligand>
</feature>
<feature type="binding site" evidence="1">
    <location>
        <position position="263"/>
    </location>
    <ligand>
        <name>Ca(2+)</name>
        <dbReference type="ChEBI" id="CHEBI:29108"/>
    </ligand>
</feature>
<feature type="binding site" evidence="1">
    <location>
        <position position="264"/>
    </location>
    <ligand>
        <name>substrate</name>
    </ligand>
</feature>
<feature type="binding site" description="axial binding residue" evidence="1">
    <location>
        <position position="275"/>
    </location>
    <ligand>
        <name>heme c</name>
        <dbReference type="ChEBI" id="CHEBI:61717"/>
        <label>5</label>
    </ligand>
    <ligandPart>
        <name>Fe</name>
        <dbReference type="ChEBI" id="CHEBI:18248"/>
    </ligandPart>
</feature>
<feature type="binding site" description="covalent" evidence="1">
    <location>
        <position position="282"/>
    </location>
    <ligand>
        <name>heme c</name>
        <dbReference type="ChEBI" id="CHEBI:61717"/>
        <label>4</label>
    </ligand>
</feature>
<feature type="binding site" description="covalent" evidence="1">
    <location>
        <position position="285"/>
    </location>
    <ligand>
        <name>heme c</name>
        <dbReference type="ChEBI" id="CHEBI:61717"/>
        <label>4</label>
    </ligand>
</feature>
<feature type="binding site" description="axial binding residue" evidence="1">
    <location>
        <position position="286"/>
    </location>
    <ligand>
        <name>heme c</name>
        <dbReference type="ChEBI" id="CHEBI:61717"/>
        <label>4</label>
    </ligand>
    <ligandPart>
        <name>Fe</name>
        <dbReference type="ChEBI" id="CHEBI:18248"/>
    </ligandPart>
</feature>
<feature type="binding site" description="axial binding residue" evidence="1">
    <location>
        <position position="301"/>
    </location>
    <ligand>
        <name>heme c</name>
        <dbReference type="ChEBI" id="CHEBI:61717"/>
        <label>2</label>
    </ligand>
    <ligandPart>
        <name>Fe</name>
        <dbReference type="ChEBI" id="CHEBI:18248"/>
    </ligandPart>
</feature>
<feature type="binding site" description="covalent" evidence="1">
    <location>
        <position position="314"/>
    </location>
    <ligand>
        <name>heme c</name>
        <dbReference type="ChEBI" id="CHEBI:61717"/>
        <label>5</label>
    </ligand>
</feature>
<feature type="binding site" description="covalent" evidence="1">
    <location>
        <position position="317"/>
    </location>
    <ligand>
        <name>heme c</name>
        <dbReference type="ChEBI" id="CHEBI:61717"/>
        <label>5</label>
    </ligand>
</feature>
<feature type="binding site" description="axial binding residue" evidence="1">
    <location>
        <position position="318"/>
    </location>
    <ligand>
        <name>heme c</name>
        <dbReference type="ChEBI" id="CHEBI:61717"/>
        <label>5</label>
    </ligand>
    <ligandPart>
        <name>Fe</name>
        <dbReference type="ChEBI" id="CHEBI:18248"/>
    </ligandPart>
</feature>
<feature type="binding site" description="axial binding residue" evidence="1">
    <location>
        <position position="393"/>
    </location>
    <ligand>
        <name>heme c</name>
        <dbReference type="ChEBI" id="CHEBI:61717"/>
        <label>4</label>
    </ligand>
    <ligandPart>
        <name>Fe</name>
        <dbReference type="ChEBI" id="CHEBI:18248"/>
    </ligandPart>
</feature>
<proteinExistence type="inferred from homology"/>
<comment type="function">
    <text evidence="1">Catalyzes the reduction of nitrite to ammonia, consuming six electrons in the process.</text>
</comment>
<comment type="catalytic activity">
    <reaction evidence="1">
        <text>6 Fe(III)-[cytochrome c] + NH4(+) + 2 H2O = 6 Fe(II)-[cytochrome c] + nitrite + 8 H(+)</text>
        <dbReference type="Rhea" id="RHEA:13089"/>
        <dbReference type="Rhea" id="RHEA-COMP:10350"/>
        <dbReference type="Rhea" id="RHEA-COMP:14399"/>
        <dbReference type="ChEBI" id="CHEBI:15377"/>
        <dbReference type="ChEBI" id="CHEBI:15378"/>
        <dbReference type="ChEBI" id="CHEBI:16301"/>
        <dbReference type="ChEBI" id="CHEBI:28938"/>
        <dbReference type="ChEBI" id="CHEBI:29033"/>
        <dbReference type="ChEBI" id="CHEBI:29034"/>
        <dbReference type="EC" id="1.7.2.2"/>
    </reaction>
</comment>
<comment type="cofactor">
    <cofactor evidence="1">
        <name>Ca(2+)</name>
        <dbReference type="ChEBI" id="CHEBI:29108"/>
    </cofactor>
    <text evidence="1">Binds 1 Ca(2+) ion per monomer.</text>
</comment>
<comment type="cofactor">
    <cofactor evidence="1">
        <name>heme c</name>
        <dbReference type="ChEBI" id="CHEBI:61717"/>
    </cofactor>
    <text evidence="1">Binds 5 heme c groups covalently per monomer.</text>
</comment>
<comment type="pathway">
    <text evidence="1">Nitrogen metabolism; nitrate reduction (assimilation).</text>
</comment>
<comment type="subcellular location">
    <subcellularLocation>
        <location evidence="1">Periplasm</location>
    </subcellularLocation>
</comment>
<comment type="similarity">
    <text evidence="1">Belongs to the cytochrome c-552 family.</text>
</comment>
<sequence>MARKTLRARRFFSLIFPFFFMTSVYAEQTSVSAKTVTVEAKNETFSPQHPDQYQSWKATSEQSAREDALAEDPRLVILWAGYPFSRDYNKPRGHAYAVTDVRETLRTGAPKTAEEGPLPMACWSCKSPDVARLIQQEGEDGYFHGKWARGGPEIVNDLGCADCHNTASDDFAQGKPALTLSRPYAERAMEAIGKPFDKAGRFDQQSMVCGQCHVEYYFEGKNKAVKFPWDEGMKVENMEKYYDAIAFSDWTNSLSKTPMLKAQHPEYETWSAGIHGKNNVTCIDCHMPKVQNAEGKLYTDHKIGNPFDNFAQTCANCHTQDKASLQKVVAERKQAIHDLKIKVEDQLVHAHFEAKAAWDAGATDAEMKPILNDIRHAQWRWDLAIASHGIHMHAPEEGLRMLGSAMDKAADARTKLARLLATKGITHEIPLPDISTKEKAQKAIGLNMQQINAEKQDFLKTVVPQWEDQARKNGLLSQ</sequence>
<name>NRFA_SALAR</name>
<evidence type="ECO:0000255" key="1">
    <source>
        <dbReference type="HAMAP-Rule" id="MF_01182"/>
    </source>
</evidence>